<accession>Q8K003</accession>
<dbReference type="EMBL" id="AK003762">
    <property type="protein sequence ID" value="BAC25052.1"/>
    <property type="molecule type" value="mRNA"/>
</dbReference>
<dbReference type="EMBL" id="AK160705">
    <property type="protein sequence ID" value="BAE35964.1"/>
    <property type="molecule type" value="mRNA"/>
</dbReference>
<dbReference type="EMBL" id="AK169860">
    <property type="protein sequence ID" value="BAE41416.1"/>
    <property type="molecule type" value="mRNA"/>
</dbReference>
<dbReference type="EMBL" id="BC106104">
    <property type="protein sequence ID" value="AAI06105.1"/>
    <property type="molecule type" value="mRNA"/>
</dbReference>
<dbReference type="CCDS" id="CCDS52930.1"/>
<dbReference type="RefSeq" id="NP_899073.1">
    <property type="nucleotide sequence ID" value="NM_183250.2"/>
</dbReference>
<dbReference type="BioGRID" id="211265">
    <property type="interactions" value="4"/>
</dbReference>
<dbReference type="FunCoup" id="Q8K003">
    <property type="interactions" value="178"/>
</dbReference>
<dbReference type="STRING" id="10090.ENSMUSP00000133026"/>
<dbReference type="iPTMnet" id="Q8K003"/>
<dbReference type="PhosphoSitePlus" id="Q8K003"/>
<dbReference type="jPOST" id="Q8K003"/>
<dbReference type="PaxDb" id="10090-ENSMUSP00000133026"/>
<dbReference type="ProteomicsDB" id="259120"/>
<dbReference type="Pumba" id="Q8K003"/>
<dbReference type="TopDownProteomics" id="Q8K003"/>
<dbReference type="Antibodypedia" id="45855">
    <property type="antibodies" value="19 antibodies from 12 providers"/>
</dbReference>
<dbReference type="Ensembl" id="ENSMUST00000167504.3">
    <property type="protein sequence ID" value="ENSMUSP00000133026.2"/>
    <property type="gene ID" value="ENSMUSG00000091537.3"/>
</dbReference>
<dbReference type="GeneID" id="66167"/>
<dbReference type="KEGG" id="mmu:66167"/>
<dbReference type="UCSC" id="uc009rrw.1">
    <property type="organism name" value="mouse"/>
</dbReference>
<dbReference type="AGR" id="MGI:1913417"/>
<dbReference type="CTD" id="51372"/>
<dbReference type="MGI" id="MGI:1913417">
    <property type="gene designation" value="Tma7"/>
</dbReference>
<dbReference type="VEuPathDB" id="HostDB:ENSMUSG00000091537"/>
<dbReference type="eggNOG" id="KOG4766">
    <property type="taxonomic scope" value="Eukaryota"/>
</dbReference>
<dbReference type="GeneTree" id="ENSGT00390000003710"/>
<dbReference type="HOGENOM" id="CLU_184661_1_1_1"/>
<dbReference type="InParanoid" id="Q8K003"/>
<dbReference type="OMA" id="KKGPMNT"/>
<dbReference type="TreeFam" id="TF300250"/>
<dbReference type="BioGRID-ORCS" id="66167">
    <property type="hits" value="5 hits in 76 CRISPR screens"/>
</dbReference>
<dbReference type="ChiTaRS" id="Tma7">
    <property type="organism name" value="mouse"/>
</dbReference>
<dbReference type="PRO" id="PR:Q8K003"/>
<dbReference type="Proteomes" id="UP000000589">
    <property type="component" value="Chromosome 9"/>
</dbReference>
<dbReference type="RNAct" id="Q8K003">
    <property type="molecule type" value="protein"/>
</dbReference>
<dbReference type="Bgee" id="ENSMUSG00000091537">
    <property type="expression patterns" value="Expressed in layer of retina and 67 other cell types or tissues"/>
</dbReference>
<dbReference type="ExpressionAtlas" id="Q8K003">
    <property type="expression patterns" value="baseline and differential"/>
</dbReference>
<dbReference type="InterPro" id="IPR015157">
    <property type="entry name" value="TMA7"/>
</dbReference>
<dbReference type="PANTHER" id="PTHR28632">
    <property type="entry name" value="TRANSLATION MACHINERY-ASSOCIATED PROTEIN 7"/>
    <property type="match status" value="1"/>
</dbReference>
<dbReference type="Pfam" id="PF09072">
    <property type="entry name" value="TMA7"/>
    <property type="match status" value="1"/>
</dbReference>
<gene>
    <name type="primary">Tma7</name>
    <name type="synonym">Ccdc72</name>
</gene>
<sequence length="64" mass="7066">MSGREGGKKKPLKQPKKQAKEMDEEDKAFKQKQKEEQKKLEELKAKAAGKGPLATGGIKKSGKK</sequence>
<name>TMA7_MOUSE</name>
<evidence type="ECO:0000250" key="1">
    <source>
        <dbReference type="UniProtKB" id="Q9Y2S6"/>
    </source>
</evidence>
<evidence type="ECO:0000255" key="2"/>
<evidence type="ECO:0000256" key="3">
    <source>
        <dbReference type="SAM" id="MobiDB-lite"/>
    </source>
</evidence>
<evidence type="ECO:0000305" key="4"/>
<protein>
    <recommendedName>
        <fullName>Translation machinery-associated protein 7</fullName>
    </recommendedName>
    <alternativeName>
        <fullName>Coiled-coil domain-containing protein 72</fullName>
    </alternativeName>
</protein>
<organism>
    <name type="scientific">Mus musculus</name>
    <name type="common">Mouse</name>
    <dbReference type="NCBI Taxonomy" id="10090"/>
    <lineage>
        <taxon>Eukaryota</taxon>
        <taxon>Metazoa</taxon>
        <taxon>Chordata</taxon>
        <taxon>Craniata</taxon>
        <taxon>Vertebrata</taxon>
        <taxon>Euteleostomi</taxon>
        <taxon>Mammalia</taxon>
        <taxon>Eutheria</taxon>
        <taxon>Euarchontoglires</taxon>
        <taxon>Glires</taxon>
        <taxon>Rodentia</taxon>
        <taxon>Myomorpha</taxon>
        <taxon>Muroidea</taxon>
        <taxon>Muridae</taxon>
        <taxon>Murinae</taxon>
        <taxon>Mus</taxon>
        <taxon>Mus</taxon>
    </lineage>
</organism>
<comment type="similarity">
    <text evidence="4">Belongs to the TMA7 family.</text>
</comment>
<proteinExistence type="inferred from homology"/>
<feature type="chain" id="PRO_0000235682" description="Translation machinery-associated protein 7">
    <location>
        <begin position="1"/>
        <end position="64"/>
    </location>
</feature>
<feature type="region of interest" description="Disordered" evidence="3">
    <location>
        <begin position="1"/>
        <end position="64"/>
    </location>
</feature>
<feature type="coiled-coil region" evidence="2">
    <location>
        <begin position="21"/>
        <end position="50"/>
    </location>
</feature>
<feature type="compositionally biased region" description="Basic and acidic residues" evidence="3">
    <location>
        <begin position="27"/>
        <end position="45"/>
    </location>
</feature>
<feature type="modified residue" description="ADP-ribosylserine" evidence="1">
    <location>
        <position position="61"/>
    </location>
</feature>
<reference key="1">
    <citation type="journal article" date="2005" name="Science">
        <title>The transcriptional landscape of the mammalian genome.</title>
        <authorList>
            <person name="Carninci P."/>
            <person name="Kasukawa T."/>
            <person name="Katayama S."/>
            <person name="Gough J."/>
            <person name="Frith M.C."/>
            <person name="Maeda N."/>
            <person name="Oyama R."/>
            <person name="Ravasi T."/>
            <person name="Lenhard B."/>
            <person name="Wells C."/>
            <person name="Kodzius R."/>
            <person name="Shimokawa K."/>
            <person name="Bajic V.B."/>
            <person name="Brenner S.E."/>
            <person name="Batalov S."/>
            <person name="Forrest A.R."/>
            <person name="Zavolan M."/>
            <person name="Davis M.J."/>
            <person name="Wilming L.G."/>
            <person name="Aidinis V."/>
            <person name="Allen J.E."/>
            <person name="Ambesi-Impiombato A."/>
            <person name="Apweiler R."/>
            <person name="Aturaliya R.N."/>
            <person name="Bailey T.L."/>
            <person name="Bansal M."/>
            <person name="Baxter L."/>
            <person name="Beisel K.W."/>
            <person name="Bersano T."/>
            <person name="Bono H."/>
            <person name="Chalk A.M."/>
            <person name="Chiu K.P."/>
            <person name="Choudhary V."/>
            <person name="Christoffels A."/>
            <person name="Clutterbuck D.R."/>
            <person name="Crowe M.L."/>
            <person name="Dalla E."/>
            <person name="Dalrymple B.P."/>
            <person name="de Bono B."/>
            <person name="Della Gatta G."/>
            <person name="di Bernardo D."/>
            <person name="Down T."/>
            <person name="Engstrom P."/>
            <person name="Fagiolini M."/>
            <person name="Faulkner G."/>
            <person name="Fletcher C.F."/>
            <person name="Fukushima T."/>
            <person name="Furuno M."/>
            <person name="Futaki S."/>
            <person name="Gariboldi M."/>
            <person name="Georgii-Hemming P."/>
            <person name="Gingeras T.R."/>
            <person name="Gojobori T."/>
            <person name="Green R.E."/>
            <person name="Gustincich S."/>
            <person name="Harbers M."/>
            <person name="Hayashi Y."/>
            <person name="Hensch T.K."/>
            <person name="Hirokawa N."/>
            <person name="Hill D."/>
            <person name="Huminiecki L."/>
            <person name="Iacono M."/>
            <person name="Ikeo K."/>
            <person name="Iwama A."/>
            <person name="Ishikawa T."/>
            <person name="Jakt M."/>
            <person name="Kanapin A."/>
            <person name="Katoh M."/>
            <person name="Kawasawa Y."/>
            <person name="Kelso J."/>
            <person name="Kitamura H."/>
            <person name="Kitano H."/>
            <person name="Kollias G."/>
            <person name="Krishnan S.P."/>
            <person name="Kruger A."/>
            <person name="Kummerfeld S.K."/>
            <person name="Kurochkin I.V."/>
            <person name="Lareau L.F."/>
            <person name="Lazarevic D."/>
            <person name="Lipovich L."/>
            <person name="Liu J."/>
            <person name="Liuni S."/>
            <person name="McWilliam S."/>
            <person name="Madan Babu M."/>
            <person name="Madera M."/>
            <person name="Marchionni L."/>
            <person name="Matsuda H."/>
            <person name="Matsuzawa S."/>
            <person name="Miki H."/>
            <person name="Mignone F."/>
            <person name="Miyake S."/>
            <person name="Morris K."/>
            <person name="Mottagui-Tabar S."/>
            <person name="Mulder N."/>
            <person name="Nakano N."/>
            <person name="Nakauchi H."/>
            <person name="Ng P."/>
            <person name="Nilsson R."/>
            <person name="Nishiguchi S."/>
            <person name="Nishikawa S."/>
            <person name="Nori F."/>
            <person name="Ohara O."/>
            <person name="Okazaki Y."/>
            <person name="Orlando V."/>
            <person name="Pang K.C."/>
            <person name="Pavan W.J."/>
            <person name="Pavesi G."/>
            <person name="Pesole G."/>
            <person name="Petrovsky N."/>
            <person name="Piazza S."/>
            <person name="Reed J."/>
            <person name="Reid J.F."/>
            <person name="Ring B.Z."/>
            <person name="Ringwald M."/>
            <person name="Rost B."/>
            <person name="Ruan Y."/>
            <person name="Salzberg S.L."/>
            <person name="Sandelin A."/>
            <person name="Schneider C."/>
            <person name="Schoenbach C."/>
            <person name="Sekiguchi K."/>
            <person name="Semple C.A."/>
            <person name="Seno S."/>
            <person name="Sessa L."/>
            <person name="Sheng Y."/>
            <person name="Shibata Y."/>
            <person name="Shimada H."/>
            <person name="Shimada K."/>
            <person name="Silva D."/>
            <person name="Sinclair B."/>
            <person name="Sperling S."/>
            <person name="Stupka E."/>
            <person name="Sugiura K."/>
            <person name="Sultana R."/>
            <person name="Takenaka Y."/>
            <person name="Taki K."/>
            <person name="Tammoja K."/>
            <person name="Tan S.L."/>
            <person name="Tang S."/>
            <person name="Taylor M.S."/>
            <person name="Tegner J."/>
            <person name="Teichmann S.A."/>
            <person name="Ueda H.R."/>
            <person name="van Nimwegen E."/>
            <person name="Verardo R."/>
            <person name="Wei C.L."/>
            <person name="Yagi K."/>
            <person name="Yamanishi H."/>
            <person name="Zabarovsky E."/>
            <person name="Zhu S."/>
            <person name="Zimmer A."/>
            <person name="Hide W."/>
            <person name="Bult C."/>
            <person name="Grimmond S.M."/>
            <person name="Teasdale R.D."/>
            <person name="Liu E.T."/>
            <person name="Brusic V."/>
            <person name="Quackenbush J."/>
            <person name="Wahlestedt C."/>
            <person name="Mattick J.S."/>
            <person name="Hume D.A."/>
            <person name="Kai C."/>
            <person name="Sasaki D."/>
            <person name="Tomaru Y."/>
            <person name="Fukuda S."/>
            <person name="Kanamori-Katayama M."/>
            <person name="Suzuki M."/>
            <person name="Aoki J."/>
            <person name="Arakawa T."/>
            <person name="Iida J."/>
            <person name="Imamura K."/>
            <person name="Itoh M."/>
            <person name="Kato T."/>
            <person name="Kawaji H."/>
            <person name="Kawagashira N."/>
            <person name="Kawashima T."/>
            <person name="Kojima M."/>
            <person name="Kondo S."/>
            <person name="Konno H."/>
            <person name="Nakano K."/>
            <person name="Ninomiya N."/>
            <person name="Nishio T."/>
            <person name="Okada M."/>
            <person name="Plessy C."/>
            <person name="Shibata K."/>
            <person name="Shiraki T."/>
            <person name="Suzuki S."/>
            <person name="Tagami M."/>
            <person name="Waki K."/>
            <person name="Watahiki A."/>
            <person name="Okamura-Oho Y."/>
            <person name="Suzuki H."/>
            <person name="Kawai J."/>
            <person name="Hayashizaki Y."/>
        </authorList>
    </citation>
    <scope>NUCLEOTIDE SEQUENCE [LARGE SCALE MRNA]</scope>
    <source>
        <strain>C57BL/6J</strain>
        <strain>NOD</strain>
        <tissue>Embryo</tissue>
        <tissue>Head</tissue>
    </source>
</reference>
<reference key="2">
    <citation type="journal article" date="2004" name="Genome Res.">
        <title>The status, quality, and expansion of the NIH full-length cDNA project: the Mammalian Gene Collection (MGC).</title>
        <authorList>
            <consortium name="The MGC Project Team"/>
        </authorList>
    </citation>
    <scope>NUCLEOTIDE SEQUENCE [LARGE SCALE MRNA]</scope>
    <source>
        <strain>C57BL/6J</strain>
        <strain>FVB/N</strain>
        <tissue>Mammary tumor</tissue>
    </source>
</reference>
<keyword id="KW-0013">ADP-ribosylation</keyword>
<keyword id="KW-0175">Coiled coil</keyword>
<keyword id="KW-1185">Reference proteome</keyword>